<comment type="function">
    <text evidence="1">Required for disulfide bond formation in some periplasmic proteins. Acts by transferring its disulfide bond to other proteins and is reduced in the process. DsbC is reoxidized by a yet uncharacterized protein. Also acts as a disulfide isomerase (By similarity).</text>
</comment>
<comment type="subunit">
    <text evidence="1">Homodimer.</text>
</comment>
<comment type="subcellular location">
    <subcellularLocation>
        <location evidence="1">Periplasm</location>
    </subcellularLocation>
</comment>
<comment type="similarity">
    <text evidence="3">Belongs to the thioredoxin family. DsbC subfamily.</text>
</comment>
<proteinExistence type="inferred from homology"/>
<dbReference type="EMBL" id="AE004439">
    <property type="protein sequence ID" value="AAK02275.1"/>
    <property type="molecule type" value="Genomic_DNA"/>
</dbReference>
<dbReference type="RefSeq" id="WP_005756009.1">
    <property type="nucleotide sequence ID" value="NC_002663.1"/>
</dbReference>
<dbReference type="SMR" id="Q9CP65"/>
<dbReference type="STRING" id="272843.PM0191"/>
<dbReference type="EnsemblBacteria" id="AAK02275">
    <property type="protein sequence ID" value="AAK02275"/>
    <property type="gene ID" value="PM0191"/>
</dbReference>
<dbReference type="GeneID" id="77207539"/>
<dbReference type="KEGG" id="pmu:PM0191"/>
<dbReference type="HOGENOM" id="CLU_083593_0_0_6"/>
<dbReference type="OrthoDB" id="12976at2"/>
<dbReference type="Proteomes" id="UP000000809">
    <property type="component" value="Chromosome"/>
</dbReference>
<dbReference type="GO" id="GO:0042597">
    <property type="term" value="C:periplasmic space"/>
    <property type="evidence" value="ECO:0007669"/>
    <property type="project" value="UniProtKB-SubCell"/>
</dbReference>
<dbReference type="CDD" id="cd03020">
    <property type="entry name" value="DsbA_DsbC_DsbG"/>
    <property type="match status" value="1"/>
</dbReference>
<dbReference type="Gene3D" id="3.10.450.70">
    <property type="entry name" value="Disulphide bond isomerase, DsbC/G, N-terminal"/>
    <property type="match status" value="1"/>
</dbReference>
<dbReference type="Gene3D" id="3.40.30.10">
    <property type="entry name" value="Glutaredoxin"/>
    <property type="match status" value="1"/>
</dbReference>
<dbReference type="InterPro" id="IPR033954">
    <property type="entry name" value="DiS-bond_Isoase_DsbC/G"/>
</dbReference>
<dbReference type="InterPro" id="IPR018950">
    <property type="entry name" value="DiS-bond_isomerase_DsbC/G_N"/>
</dbReference>
<dbReference type="InterPro" id="IPR009094">
    <property type="entry name" value="DiS-bond_isomerase_DsbC/G_N_sf"/>
</dbReference>
<dbReference type="InterPro" id="IPR051470">
    <property type="entry name" value="Thiol:disulfide_interchange"/>
</dbReference>
<dbReference type="InterPro" id="IPR012336">
    <property type="entry name" value="Thioredoxin-like_fold"/>
</dbReference>
<dbReference type="InterPro" id="IPR036249">
    <property type="entry name" value="Thioredoxin-like_sf"/>
</dbReference>
<dbReference type="NCBIfam" id="NF008129">
    <property type="entry name" value="PRK10877.1"/>
    <property type="match status" value="1"/>
</dbReference>
<dbReference type="PANTHER" id="PTHR35272:SF3">
    <property type="entry name" value="THIOL:DISULFIDE INTERCHANGE PROTEIN DSBC"/>
    <property type="match status" value="1"/>
</dbReference>
<dbReference type="PANTHER" id="PTHR35272">
    <property type="entry name" value="THIOL:DISULFIDE INTERCHANGE PROTEIN DSBC-RELATED"/>
    <property type="match status" value="1"/>
</dbReference>
<dbReference type="Pfam" id="PF10411">
    <property type="entry name" value="DsbC_N"/>
    <property type="match status" value="1"/>
</dbReference>
<dbReference type="Pfam" id="PF13098">
    <property type="entry name" value="Thioredoxin_2"/>
    <property type="match status" value="1"/>
</dbReference>
<dbReference type="SUPFAM" id="SSF54423">
    <property type="entry name" value="DsbC/DsbG N-terminal domain-like"/>
    <property type="match status" value="1"/>
</dbReference>
<dbReference type="SUPFAM" id="SSF52833">
    <property type="entry name" value="Thioredoxin-like"/>
    <property type="match status" value="1"/>
</dbReference>
<sequence length="227" mass="25029">MKKILSTLLMLGMSSLTFANSQQVVEQLQKMGLSGVEVSDSPVKGIKTAVTDNGIFYITEDAKYILDGKLYALSEKGLRDVSSSLLLDKLTAYKNEMVVYPAKDEKHVITVFMDTSCHYCKVLHKQIKEYNDLGITVRYLAFPRGGVQSKTAREMEAIFTAQDPQFALTEAINGNPPKTLKDANITKKHYQLGLQFGVNGTPSIVTEKGELIGGYLKPADLLSELAQ</sequence>
<reference key="1">
    <citation type="journal article" date="2001" name="Proc. Natl. Acad. Sci. U.S.A.">
        <title>Complete genomic sequence of Pasteurella multocida Pm70.</title>
        <authorList>
            <person name="May B.J."/>
            <person name="Zhang Q."/>
            <person name="Li L.L."/>
            <person name="Paustian M.L."/>
            <person name="Whittam T.S."/>
            <person name="Kapur V."/>
        </authorList>
    </citation>
    <scope>NUCLEOTIDE SEQUENCE [LARGE SCALE GENOMIC DNA]</scope>
    <source>
        <strain>Pm70</strain>
    </source>
</reference>
<accession>Q9CP65</accession>
<protein>
    <recommendedName>
        <fullName>Thiol:disulfide interchange protein DsbC</fullName>
    </recommendedName>
</protein>
<organism>
    <name type="scientific">Pasteurella multocida (strain Pm70)</name>
    <dbReference type="NCBI Taxonomy" id="272843"/>
    <lineage>
        <taxon>Bacteria</taxon>
        <taxon>Pseudomonadati</taxon>
        <taxon>Pseudomonadota</taxon>
        <taxon>Gammaproteobacteria</taxon>
        <taxon>Pasteurellales</taxon>
        <taxon>Pasteurellaceae</taxon>
        <taxon>Pasteurella</taxon>
    </lineage>
</organism>
<keyword id="KW-1015">Disulfide bond</keyword>
<keyword id="KW-0574">Periplasm</keyword>
<keyword id="KW-0676">Redox-active center</keyword>
<keyword id="KW-1185">Reference proteome</keyword>
<keyword id="KW-0732">Signal</keyword>
<feature type="signal peptide" evidence="1">
    <location>
        <begin position="1"/>
        <end position="19"/>
    </location>
</feature>
<feature type="chain" id="PRO_0000034277" description="Thiol:disulfide interchange protein DsbC">
    <location>
        <begin position="20"/>
        <end position="227"/>
    </location>
</feature>
<feature type="disulfide bond" description="Redox-active" evidence="2">
    <location>
        <begin position="117"/>
        <end position="120"/>
    </location>
</feature>
<evidence type="ECO:0000250" key="1"/>
<evidence type="ECO:0000255" key="2"/>
<evidence type="ECO:0000305" key="3"/>
<name>DSBC_PASMU</name>
<gene>
    <name type="primary">dsbC</name>
    <name type="ordered locus">PM0191</name>
</gene>